<feature type="chain" id="PRO_1000012641" description="ATP-dependent protease subunit HslV">
    <location>
        <begin position="1"/>
        <end position="184"/>
    </location>
</feature>
<feature type="active site" evidence="1">
    <location>
        <position position="12"/>
    </location>
</feature>
<feature type="binding site" evidence="1">
    <location>
        <position position="166"/>
    </location>
    <ligand>
        <name>Na(+)</name>
        <dbReference type="ChEBI" id="CHEBI:29101"/>
    </ligand>
</feature>
<feature type="binding site" evidence="1">
    <location>
        <position position="169"/>
    </location>
    <ligand>
        <name>Na(+)</name>
        <dbReference type="ChEBI" id="CHEBI:29101"/>
    </ligand>
</feature>
<feature type="binding site" evidence="1">
    <location>
        <position position="172"/>
    </location>
    <ligand>
        <name>Na(+)</name>
        <dbReference type="ChEBI" id="CHEBI:29101"/>
    </ligand>
</feature>
<proteinExistence type="inferred from homology"/>
<reference key="1">
    <citation type="journal article" date="2006" name="Appl. Environ. Microbiol.">
        <title>Genome sequence of the chemolithoautotrophic nitrite-oxidizing bacterium Nitrobacter winogradskyi Nb-255.</title>
        <authorList>
            <person name="Starkenburg S.R."/>
            <person name="Chain P.S.G."/>
            <person name="Sayavedra-Soto L.A."/>
            <person name="Hauser L."/>
            <person name="Land M.L."/>
            <person name="Larimer F.W."/>
            <person name="Malfatti S.A."/>
            <person name="Klotz M.G."/>
            <person name="Bottomley P.J."/>
            <person name="Arp D.J."/>
            <person name="Hickey W.J."/>
        </authorList>
    </citation>
    <scope>NUCLEOTIDE SEQUENCE [LARGE SCALE GENOMIC DNA]</scope>
    <source>
        <strain>ATCC 25391 / DSM 10237 / CIP 104748 / NCIMB 11846 / Nb-255</strain>
    </source>
</reference>
<organism>
    <name type="scientific">Nitrobacter winogradskyi (strain ATCC 25391 / DSM 10237 / CIP 104748 / NCIMB 11846 / Nb-255)</name>
    <dbReference type="NCBI Taxonomy" id="323098"/>
    <lineage>
        <taxon>Bacteria</taxon>
        <taxon>Pseudomonadati</taxon>
        <taxon>Pseudomonadota</taxon>
        <taxon>Alphaproteobacteria</taxon>
        <taxon>Hyphomicrobiales</taxon>
        <taxon>Nitrobacteraceae</taxon>
        <taxon>Nitrobacter</taxon>
    </lineage>
</organism>
<comment type="function">
    <text evidence="1">Protease subunit of a proteasome-like degradation complex believed to be a general protein degrading machinery.</text>
</comment>
<comment type="catalytic activity">
    <reaction evidence="1">
        <text>ATP-dependent cleavage of peptide bonds with broad specificity.</text>
        <dbReference type="EC" id="3.4.25.2"/>
    </reaction>
</comment>
<comment type="activity regulation">
    <text evidence="1">Allosterically activated by HslU binding.</text>
</comment>
<comment type="subunit">
    <text evidence="1">A double ring-shaped homohexamer of HslV is capped on each side by a ring-shaped HslU homohexamer. The assembly of the HslU/HslV complex is dependent on binding of ATP.</text>
</comment>
<comment type="subcellular location">
    <subcellularLocation>
        <location evidence="1">Cytoplasm</location>
    </subcellularLocation>
</comment>
<comment type="similarity">
    <text evidence="1">Belongs to the peptidase T1B family. HslV subfamily.</text>
</comment>
<name>HSLV_NITWN</name>
<evidence type="ECO:0000255" key="1">
    <source>
        <dbReference type="HAMAP-Rule" id="MF_00248"/>
    </source>
</evidence>
<gene>
    <name evidence="1" type="primary">hslV</name>
    <name type="ordered locus">Nwi_0127</name>
</gene>
<protein>
    <recommendedName>
        <fullName evidence="1">ATP-dependent protease subunit HslV</fullName>
        <ecNumber evidence="1">3.4.25.2</ecNumber>
    </recommendedName>
</protein>
<dbReference type="EC" id="3.4.25.2" evidence="1"/>
<dbReference type="EMBL" id="CP000115">
    <property type="protein sequence ID" value="ABA03395.1"/>
    <property type="molecule type" value="Genomic_DNA"/>
</dbReference>
<dbReference type="RefSeq" id="WP_011313464.1">
    <property type="nucleotide sequence ID" value="NC_007406.1"/>
</dbReference>
<dbReference type="SMR" id="Q3SWE6"/>
<dbReference type="STRING" id="323098.Nwi_0127"/>
<dbReference type="MEROPS" id="T01.006"/>
<dbReference type="KEGG" id="nwi:Nwi_0127"/>
<dbReference type="eggNOG" id="COG5405">
    <property type="taxonomic scope" value="Bacteria"/>
</dbReference>
<dbReference type="HOGENOM" id="CLU_093872_1_0_5"/>
<dbReference type="OrthoDB" id="9804884at2"/>
<dbReference type="Proteomes" id="UP000002531">
    <property type="component" value="Chromosome"/>
</dbReference>
<dbReference type="GO" id="GO:0009376">
    <property type="term" value="C:HslUV protease complex"/>
    <property type="evidence" value="ECO:0007669"/>
    <property type="project" value="UniProtKB-UniRule"/>
</dbReference>
<dbReference type="GO" id="GO:0005839">
    <property type="term" value="C:proteasome core complex"/>
    <property type="evidence" value="ECO:0007669"/>
    <property type="project" value="InterPro"/>
</dbReference>
<dbReference type="GO" id="GO:0046872">
    <property type="term" value="F:metal ion binding"/>
    <property type="evidence" value="ECO:0007669"/>
    <property type="project" value="UniProtKB-KW"/>
</dbReference>
<dbReference type="GO" id="GO:0004298">
    <property type="term" value="F:threonine-type endopeptidase activity"/>
    <property type="evidence" value="ECO:0007669"/>
    <property type="project" value="UniProtKB-KW"/>
</dbReference>
<dbReference type="GO" id="GO:0051603">
    <property type="term" value="P:proteolysis involved in protein catabolic process"/>
    <property type="evidence" value="ECO:0007669"/>
    <property type="project" value="InterPro"/>
</dbReference>
<dbReference type="CDD" id="cd01913">
    <property type="entry name" value="protease_HslV"/>
    <property type="match status" value="1"/>
</dbReference>
<dbReference type="FunFam" id="3.60.20.10:FF:000002">
    <property type="entry name" value="ATP-dependent protease subunit HslV"/>
    <property type="match status" value="1"/>
</dbReference>
<dbReference type="Gene3D" id="3.60.20.10">
    <property type="entry name" value="Glutamine Phosphoribosylpyrophosphate, subunit 1, domain 1"/>
    <property type="match status" value="1"/>
</dbReference>
<dbReference type="HAMAP" id="MF_00248">
    <property type="entry name" value="HslV"/>
    <property type="match status" value="1"/>
</dbReference>
<dbReference type="InterPro" id="IPR022281">
    <property type="entry name" value="ATP-dep_Prtase_HsIV_su"/>
</dbReference>
<dbReference type="InterPro" id="IPR029055">
    <property type="entry name" value="Ntn_hydrolases_N"/>
</dbReference>
<dbReference type="InterPro" id="IPR001353">
    <property type="entry name" value="Proteasome_sua/b"/>
</dbReference>
<dbReference type="InterPro" id="IPR023333">
    <property type="entry name" value="Proteasome_suB-type"/>
</dbReference>
<dbReference type="NCBIfam" id="TIGR03692">
    <property type="entry name" value="ATP_dep_HslV"/>
    <property type="match status" value="1"/>
</dbReference>
<dbReference type="NCBIfam" id="NF003964">
    <property type="entry name" value="PRK05456.1"/>
    <property type="match status" value="1"/>
</dbReference>
<dbReference type="PANTHER" id="PTHR32194:SF7">
    <property type="entry name" value="ATP-DEPENDENT PROTEASE SUBUNIT HSLV"/>
    <property type="match status" value="1"/>
</dbReference>
<dbReference type="PANTHER" id="PTHR32194">
    <property type="entry name" value="METALLOPROTEASE TLDD"/>
    <property type="match status" value="1"/>
</dbReference>
<dbReference type="Pfam" id="PF00227">
    <property type="entry name" value="Proteasome"/>
    <property type="match status" value="1"/>
</dbReference>
<dbReference type="PIRSF" id="PIRSF039093">
    <property type="entry name" value="HslV"/>
    <property type="match status" value="1"/>
</dbReference>
<dbReference type="SUPFAM" id="SSF56235">
    <property type="entry name" value="N-terminal nucleophile aminohydrolases (Ntn hydrolases)"/>
    <property type="match status" value="1"/>
</dbReference>
<dbReference type="PROSITE" id="PS51476">
    <property type="entry name" value="PROTEASOME_BETA_2"/>
    <property type="match status" value="1"/>
</dbReference>
<accession>Q3SWE6</accession>
<keyword id="KW-0021">Allosteric enzyme</keyword>
<keyword id="KW-0963">Cytoplasm</keyword>
<keyword id="KW-0378">Hydrolase</keyword>
<keyword id="KW-0479">Metal-binding</keyword>
<keyword id="KW-0645">Protease</keyword>
<keyword id="KW-1185">Reference proteome</keyword>
<keyword id="KW-0915">Sodium</keyword>
<keyword id="KW-0888">Threonine protease</keyword>
<sequence>MQASQPETWHGTTILTVRKGGKVVIGGDGQVSIGQTVIKSNAKKVRKLGKGDVIGGFAGATADAFTLFERLESKLEQYPGQLTRAAVELAKDWRTDRYLRRLEAMMLVADKDVSLVLTGTGDVLEPESGVMAIGSGGNYALAAARALIDSDKDAETIVRSALDIAADICVYTNRNLTIEALAAS</sequence>